<gene>
    <name type="primary">Ubr5</name>
    <name type="synonym">Dd5</name>
    <name type="synonym">Edd</name>
    <name type="synonym">Edd1</name>
    <name type="synonym">Hyd</name>
</gene>
<proteinExistence type="evidence at protein level"/>
<comment type="function">
    <text evidence="1 2">E3 ubiquitin-protein ligase involved in different protein quality control pathways in the cytoplasm and nucleus (By similarity). Mainly acts as a ubiquitin chain elongator that extends pre-ubiquitinated substrates (By similarity). Component of the N-end rule pathway: ubiquitinates proteins bearing specific N-terminal residues that are destabilizing according to the N-end rule, leading to their degradation (By similarity). Recognizes type-1 N-degrons, containing positively charged amino acids (Arg, Lys and His) (By similarity). Together with UBR4, part of a cytoplasm protein quality control pathway that prevents protein aggregation by catalyzing assembly of heterotypic 'Lys-11'-/'Lys-48'-linked branched ubiquitin chains on aggregated proteins, leading to substrate recognition by the segregase p97/VCP and degradation by the proteasome: UBR5 is probably branching multiple 'Lys-48'-linked chains of substrates initially modified with mixed conjugates by UBR4 (By similarity). Together with ITCH, catalyzes 'Lys-48'-/'Lys-63'-branched ubiquitination of TXNIP, leading to its degradation: UBR5 mediates branching of 'Lys-48'-linked chains of substrates initially modified with 'Lys-63'-linked conjugates by ITCH (By similarity). Catalytic component of a nuclear protein quality control pathway that mediates ubiquitination and degradation of unpaired transcription factors (i.e. transcription factors that are not assembled into functional multiprotein complexes): specifically recognizes and binds degrons that are not accessible when transcription regulators are associated with their coactivators (By similarity). Ubiquitinates various unpaired transcription regulator (MYC, SUPT4H1, SUPT5H, CDC20 and MCRS1), as well as ligand-bound nuclear receptors (ESR1, NR1H3, NR3C1, PGR, RARA, RXRA AND VDR) that are not associated with their nuclear receptor coactivators (NCOAs) (By similarity). Involved in maturation and/or transcriptional regulation of mRNA by mediating polyubiquitination and activation of CDK9 (By similarity). Also acts as a regulator of DNA damage response by acting as a suppressor of RNF168, an E3 ubiquitin-protein ligase that promotes accumulation of 'Lys-63'-linked histone H2A and H2AX at DNA damage sites, thereby acting as a guard against excessive spreading of ubiquitinated chromatin at damaged chromosomes (By similarity). Regulates DNA topoisomerase II binding protein (TopBP1) in the DNA damage response (By similarity). Ubiquitinates acetylated PCK1 (By similarity). Acts as a positive regulator of the canonical Wnt signaling pathway by mediating (1) ubiquitination and stabilization of CTNNB1, and (2) 'Lys-48'-linked ubiquitination and degradation of TLE3 (By similarity). Promotes disassembly of the mitotic checkpoint complex (MCC) from the APC/C complex by catalyzing ubiquitination of BUB1B, BUB3 and CDC20 (By similarity). Plays an essential role in extraembryonic development (By similarity). Required for the maintenance of skeletal tissue homeostasis by acting as an inhibitor of hedgehog (HH) signaling (By similarity).</text>
</comment>
<comment type="catalytic activity">
    <reaction evidence="1">
        <text>S-ubiquitinyl-[E2 ubiquitin-conjugating enzyme]-L-cysteine + [acceptor protein]-L-lysine = [E2 ubiquitin-conjugating enzyme]-L-cysteine + N(6)-ubiquitinyl-[acceptor protein]-L-lysine.</text>
        <dbReference type="EC" id="2.3.2.26"/>
    </reaction>
</comment>
<comment type="pathway">
    <text evidence="1">Protein modification; protein ubiquitination.</text>
</comment>
<comment type="subunit">
    <text evidence="1">Homotetramer; composed of a dimer of dimers. Associates with CDK9 and TFIIS/TCEA1 and forms a transcription regulatory complex made of CDK9, RNAP II, UBR5 and TFIIS/TCEA1 that can stimulate target gene transcription (e.g. gamma fibrinogen/FGG) by recruiting their promoters. Associates with the E3 ligase complex containing DYRK2, EDD/UBR5, DDB1 and DCAF1 proteins (EDVP complex). Binds TOPBP1. Interacts with PIH1D1. Interacts with CIB1.</text>
</comment>
<comment type="subcellular location">
    <subcellularLocation>
        <location evidence="1">Nucleus</location>
    </subcellularLocation>
    <subcellularLocation>
        <location evidence="1">Cytoplasm</location>
    </subcellularLocation>
</comment>
<comment type="tissue specificity">
    <text evidence="8">Highest levels found in testis. Also present in liver, kidney, lung and brain.</text>
</comment>
<comment type="developmental stage">
    <text evidence="8">In early postnatal life, expression in the testis increases to reach a maximum around day 28.</text>
</comment>
<comment type="domain">
    <text evidence="1">The UBR-type zinc finger forms a pocket that mediates recognition of type 1 N-degrons.</text>
</comment>
<comment type="domain">
    <text evidence="1">The UBA domain recognizes and binds ubiquitin. It acts as an ubiquitin acceptor required to place 'Lys-48' of ubiquitin into the HECT domain activie site, thereby potentiating the E3 ubiquitin-protein ligase activity.</text>
</comment>
<comment type="similarity">
    <text evidence="9">Belongs to the UBR5 family.</text>
</comment>
<comment type="sequence caution" evidence="9">
    <conflict type="frameshift">
        <sequence resource="EMBL-CDS" id="CAA45756"/>
    </conflict>
</comment>
<evidence type="ECO:0000250" key="1">
    <source>
        <dbReference type="UniProtKB" id="O95071"/>
    </source>
</evidence>
<evidence type="ECO:0000250" key="2">
    <source>
        <dbReference type="UniProtKB" id="Q80TP3"/>
    </source>
</evidence>
<evidence type="ECO:0000255" key="3">
    <source>
        <dbReference type="PROSITE-ProRule" id="PRU00104"/>
    </source>
</evidence>
<evidence type="ECO:0000255" key="4">
    <source>
        <dbReference type="PROSITE-ProRule" id="PRU00212"/>
    </source>
</evidence>
<evidence type="ECO:0000255" key="5">
    <source>
        <dbReference type="PROSITE-ProRule" id="PRU00508"/>
    </source>
</evidence>
<evidence type="ECO:0000255" key="6">
    <source>
        <dbReference type="PROSITE-ProRule" id="PRU00641"/>
    </source>
</evidence>
<evidence type="ECO:0000256" key="7">
    <source>
        <dbReference type="SAM" id="MobiDB-lite"/>
    </source>
</evidence>
<evidence type="ECO:0000269" key="8">
    <source>
    </source>
</evidence>
<evidence type="ECO:0000305" key="9"/>
<evidence type="ECO:0007744" key="10">
    <source>
        <dbReference type="PDB" id="3NTW"/>
    </source>
</evidence>
<evidence type="ECO:0007744" key="11">
    <source>
    </source>
</evidence>
<evidence type="ECO:0007829" key="12">
    <source>
        <dbReference type="PDB" id="3NTW"/>
    </source>
</evidence>
<organism>
    <name type="scientific">Rattus norvegicus</name>
    <name type="common">Rat</name>
    <dbReference type="NCBI Taxonomy" id="10116"/>
    <lineage>
        <taxon>Eukaryota</taxon>
        <taxon>Metazoa</taxon>
        <taxon>Chordata</taxon>
        <taxon>Craniata</taxon>
        <taxon>Vertebrata</taxon>
        <taxon>Euteleostomi</taxon>
        <taxon>Mammalia</taxon>
        <taxon>Eutheria</taxon>
        <taxon>Euarchontoglires</taxon>
        <taxon>Glires</taxon>
        <taxon>Rodentia</taxon>
        <taxon>Myomorpha</taxon>
        <taxon>Muroidea</taxon>
        <taxon>Muridae</taxon>
        <taxon>Murinae</taxon>
        <taxon>Rattus</taxon>
    </lineage>
</organism>
<dbReference type="EC" id="2.3.2.26" evidence="1"/>
<dbReference type="EMBL" id="X64411">
    <property type="protein sequence ID" value="CAA45756.1"/>
    <property type="status" value="ALT_FRAME"/>
    <property type="molecule type" value="mRNA"/>
</dbReference>
<dbReference type="PIR" id="S22659">
    <property type="entry name" value="S22659"/>
</dbReference>
<dbReference type="PDB" id="3NTW">
    <property type="method" value="X-ray"/>
    <property type="resolution" value="2.60 A"/>
    <property type="chains" value="A/C=2383-2442"/>
</dbReference>
<dbReference type="PDBsum" id="3NTW"/>
<dbReference type="SMR" id="Q62671"/>
<dbReference type="ELM" id="Q62671"/>
<dbReference type="FunCoup" id="Q62671">
    <property type="interactions" value="4769"/>
</dbReference>
<dbReference type="IntAct" id="Q62671">
    <property type="interactions" value="1"/>
</dbReference>
<dbReference type="STRING" id="10116.ENSRNOP00000009115"/>
<dbReference type="GlyGen" id="Q62671">
    <property type="glycosylation" value="1 site"/>
</dbReference>
<dbReference type="iPTMnet" id="Q62671"/>
<dbReference type="PhosphoSitePlus" id="Q62671"/>
<dbReference type="jPOST" id="Q62671"/>
<dbReference type="PaxDb" id="10116-ENSRNOP00000009115"/>
<dbReference type="UCSC" id="RGD:621236">
    <property type="organism name" value="rat"/>
</dbReference>
<dbReference type="AGR" id="RGD:621236"/>
<dbReference type="RGD" id="621236">
    <property type="gene designation" value="Ubr5"/>
</dbReference>
<dbReference type="eggNOG" id="KOG0943">
    <property type="taxonomic scope" value="Eukaryota"/>
</dbReference>
<dbReference type="InParanoid" id="Q62671"/>
<dbReference type="UniPathway" id="UPA00143"/>
<dbReference type="EvolutionaryTrace" id="Q62671"/>
<dbReference type="PRO" id="PR:Q62671"/>
<dbReference type="Proteomes" id="UP000002494">
    <property type="component" value="Unplaced"/>
</dbReference>
<dbReference type="GO" id="GO:0000785">
    <property type="term" value="C:chromatin"/>
    <property type="evidence" value="ECO:0000266"/>
    <property type="project" value="RGD"/>
</dbReference>
<dbReference type="GO" id="GO:0005737">
    <property type="term" value="C:cytoplasm"/>
    <property type="evidence" value="ECO:0000250"/>
    <property type="project" value="UniProtKB"/>
</dbReference>
<dbReference type="GO" id="GO:0005634">
    <property type="term" value="C:nucleus"/>
    <property type="evidence" value="ECO:0000266"/>
    <property type="project" value="RGD"/>
</dbReference>
<dbReference type="GO" id="GO:0048471">
    <property type="term" value="C:perinuclear region of cytoplasm"/>
    <property type="evidence" value="ECO:0000266"/>
    <property type="project" value="RGD"/>
</dbReference>
<dbReference type="GO" id="GO:0032991">
    <property type="term" value="C:protein-containing complex"/>
    <property type="evidence" value="ECO:0000266"/>
    <property type="project" value="RGD"/>
</dbReference>
<dbReference type="GO" id="GO:0019904">
    <property type="term" value="F:protein domain specific binding"/>
    <property type="evidence" value="ECO:0000314"/>
    <property type="project" value="RGD"/>
</dbReference>
<dbReference type="GO" id="GO:0003723">
    <property type="term" value="F:RNA binding"/>
    <property type="evidence" value="ECO:0007669"/>
    <property type="project" value="InterPro"/>
</dbReference>
<dbReference type="GO" id="GO:0043130">
    <property type="term" value="F:ubiquitin binding"/>
    <property type="evidence" value="ECO:0000250"/>
    <property type="project" value="UniProtKB"/>
</dbReference>
<dbReference type="GO" id="GO:0061630">
    <property type="term" value="F:ubiquitin protein ligase activity"/>
    <property type="evidence" value="ECO:0000314"/>
    <property type="project" value="RGD"/>
</dbReference>
<dbReference type="GO" id="GO:0034450">
    <property type="term" value="F:ubiquitin-ubiquitin ligase activity"/>
    <property type="evidence" value="ECO:0000266"/>
    <property type="project" value="RGD"/>
</dbReference>
<dbReference type="GO" id="GO:0008270">
    <property type="term" value="F:zinc ion binding"/>
    <property type="evidence" value="ECO:0007669"/>
    <property type="project" value="UniProtKB-KW"/>
</dbReference>
<dbReference type="GO" id="GO:0140455">
    <property type="term" value="P:cytoplasm protein quality control"/>
    <property type="evidence" value="ECO:0000266"/>
    <property type="project" value="RGD"/>
</dbReference>
<dbReference type="GO" id="GO:0071629">
    <property type="term" value="P:cytoplasm protein quality control by the ubiquitin-proteasome system"/>
    <property type="evidence" value="ECO:0000250"/>
    <property type="project" value="UniProtKB"/>
</dbReference>
<dbReference type="GO" id="GO:0006974">
    <property type="term" value="P:DNA damage response"/>
    <property type="evidence" value="ECO:0000266"/>
    <property type="project" value="RGD"/>
</dbReference>
<dbReference type="GO" id="GO:0006281">
    <property type="term" value="P:DNA repair"/>
    <property type="evidence" value="ECO:0007669"/>
    <property type="project" value="UniProtKB-KW"/>
</dbReference>
<dbReference type="GO" id="GO:0140861">
    <property type="term" value="P:DNA repair-dependent chromatin remodeling"/>
    <property type="evidence" value="ECO:0000250"/>
    <property type="project" value="UniProtKB"/>
</dbReference>
<dbReference type="GO" id="GO:0033696">
    <property type="term" value="P:heterochromatin boundary formation"/>
    <property type="evidence" value="ECO:0000250"/>
    <property type="project" value="UniProtKB"/>
</dbReference>
<dbReference type="GO" id="GO:0032700">
    <property type="term" value="P:negative regulation of interleukin-17 production"/>
    <property type="evidence" value="ECO:0000266"/>
    <property type="project" value="RGD"/>
</dbReference>
<dbReference type="GO" id="GO:0045879">
    <property type="term" value="P:negative regulation of smoothened signaling pathway"/>
    <property type="evidence" value="ECO:0000250"/>
    <property type="project" value="UniProtKB"/>
</dbReference>
<dbReference type="GO" id="GO:0071630">
    <property type="term" value="P:nuclear protein quality control by the ubiquitin-proteasome system"/>
    <property type="evidence" value="ECO:0000250"/>
    <property type="project" value="UniProtKB"/>
</dbReference>
<dbReference type="GO" id="GO:0090263">
    <property type="term" value="P:positive regulation of canonical Wnt signaling pathway"/>
    <property type="evidence" value="ECO:0000266"/>
    <property type="project" value="RGD"/>
</dbReference>
<dbReference type="GO" id="GO:0010628">
    <property type="term" value="P:positive regulation of gene expression"/>
    <property type="evidence" value="ECO:0000266"/>
    <property type="project" value="RGD"/>
</dbReference>
<dbReference type="GO" id="GO:0042307">
    <property type="term" value="P:positive regulation of protein import into nucleus"/>
    <property type="evidence" value="ECO:0000266"/>
    <property type="project" value="RGD"/>
</dbReference>
<dbReference type="GO" id="GO:0050847">
    <property type="term" value="P:progesterone receptor signaling pathway"/>
    <property type="evidence" value="ECO:0000266"/>
    <property type="project" value="RGD"/>
</dbReference>
<dbReference type="GO" id="GO:0043161">
    <property type="term" value="P:proteasome-mediated ubiquitin-dependent protein catabolic process"/>
    <property type="evidence" value="ECO:0000266"/>
    <property type="project" value="RGD"/>
</dbReference>
<dbReference type="GO" id="GO:0141198">
    <property type="term" value="P:protein branched polyubiquitination"/>
    <property type="evidence" value="ECO:0000266"/>
    <property type="project" value="RGD"/>
</dbReference>
<dbReference type="GO" id="GO:0070979">
    <property type="term" value="P:protein K11-linked ubiquitination"/>
    <property type="evidence" value="ECO:0000266"/>
    <property type="project" value="RGD"/>
</dbReference>
<dbReference type="GO" id="GO:0035519">
    <property type="term" value="P:protein K29-linked ubiquitination"/>
    <property type="evidence" value="ECO:0000266"/>
    <property type="project" value="RGD"/>
</dbReference>
<dbReference type="GO" id="GO:0070936">
    <property type="term" value="P:protein K48-linked ubiquitination"/>
    <property type="evidence" value="ECO:0000266"/>
    <property type="project" value="RGD"/>
</dbReference>
<dbReference type="GO" id="GO:0000209">
    <property type="term" value="P:protein polyubiquitination"/>
    <property type="evidence" value="ECO:0000266"/>
    <property type="project" value="RGD"/>
</dbReference>
<dbReference type="GO" id="GO:0016567">
    <property type="term" value="P:protein ubiquitination"/>
    <property type="evidence" value="ECO:0000314"/>
    <property type="project" value="RGD"/>
</dbReference>
<dbReference type="GO" id="GO:0031647">
    <property type="term" value="P:regulation of protein stability"/>
    <property type="evidence" value="ECO:0000266"/>
    <property type="project" value="RGD"/>
</dbReference>
<dbReference type="GO" id="GO:0071596">
    <property type="term" value="P:ubiquitin-dependent protein catabolic process via the N-end rule pathway"/>
    <property type="evidence" value="ECO:0000266"/>
    <property type="project" value="RGD"/>
</dbReference>
<dbReference type="CDD" id="cd14423">
    <property type="entry name" value="CUE_UBR5"/>
    <property type="match status" value="1"/>
</dbReference>
<dbReference type="CDD" id="cd19675">
    <property type="entry name" value="UBR-box_UBR5"/>
    <property type="match status" value="1"/>
</dbReference>
<dbReference type="FunFam" id="1.10.1900.10:FF:000002">
    <property type="entry name" value="E3 ubiquitin-protein ligase UBR5 isoform X1"/>
    <property type="match status" value="1"/>
</dbReference>
<dbReference type="FunFam" id="3.90.1750.10:FF:000011">
    <property type="entry name" value="E3 ubiquitin-protein ligase UBR5 isoform X1"/>
    <property type="match status" value="1"/>
</dbReference>
<dbReference type="FunFam" id="2.130.10.30:FF:000007">
    <property type="entry name" value="E3 ubiquitin-protein ligase UBR5 isoform X2"/>
    <property type="match status" value="1"/>
</dbReference>
<dbReference type="FunFam" id="3.30.2160.10:FF:000006">
    <property type="entry name" value="E3 ubiquitin-protein ligase UBR5 isoform X2"/>
    <property type="match status" value="1"/>
</dbReference>
<dbReference type="FunFam" id="3.90.1750.10:FF:000016">
    <property type="entry name" value="E3 ubiquitin-protein ligase UBR5 isoform X2"/>
    <property type="match status" value="1"/>
</dbReference>
<dbReference type="FunFam" id="1.10.8.10:FF:000009">
    <property type="entry name" value="Putative E3 ubiquitin-protein ligase UBR5"/>
    <property type="match status" value="1"/>
</dbReference>
<dbReference type="FunFam" id="3.30.2410.10:FF:000008">
    <property type="entry name" value="Putative E3 ubiquitin-protein ligase UBR5"/>
    <property type="match status" value="1"/>
</dbReference>
<dbReference type="Gene3D" id="1.10.1900.10">
    <property type="entry name" value="c-terminal domain of poly(a) binding protein"/>
    <property type="match status" value="1"/>
</dbReference>
<dbReference type="Gene3D" id="1.10.8.10">
    <property type="entry name" value="DNA helicase RuvA subunit, C-terminal domain"/>
    <property type="match status" value="1"/>
</dbReference>
<dbReference type="Gene3D" id="3.30.2160.10">
    <property type="entry name" value="Hect, E3 ligase catalytic domain"/>
    <property type="match status" value="1"/>
</dbReference>
<dbReference type="Gene3D" id="3.30.2410.10">
    <property type="entry name" value="Hect, E3 ligase catalytic domain"/>
    <property type="match status" value="1"/>
</dbReference>
<dbReference type="Gene3D" id="3.90.1750.10">
    <property type="entry name" value="Hect, E3 ligase catalytic domains"/>
    <property type="match status" value="2"/>
</dbReference>
<dbReference type="Gene3D" id="2.130.10.30">
    <property type="entry name" value="Regulator of chromosome condensation 1/beta-lactamase-inhibitor protein II"/>
    <property type="match status" value="1"/>
</dbReference>
<dbReference type="InterPro" id="IPR000569">
    <property type="entry name" value="HECT_dom"/>
</dbReference>
<dbReference type="InterPro" id="IPR035983">
    <property type="entry name" value="Hect_E3_ubiquitin_ligase"/>
</dbReference>
<dbReference type="InterPro" id="IPR036053">
    <property type="entry name" value="PABP-dom"/>
</dbReference>
<dbReference type="InterPro" id="IPR002004">
    <property type="entry name" value="PABP_HYD_C"/>
</dbReference>
<dbReference type="InterPro" id="IPR009091">
    <property type="entry name" value="RCC1/BLIP-II"/>
</dbReference>
<dbReference type="InterPro" id="IPR047503">
    <property type="entry name" value="UBR-box_UBR5"/>
</dbReference>
<dbReference type="InterPro" id="IPR024725">
    <property type="entry name" value="UBR5_UBA"/>
</dbReference>
<dbReference type="InterPro" id="IPR003126">
    <property type="entry name" value="Znf_UBR"/>
</dbReference>
<dbReference type="PANTHER" id="PTHR46276">
    <property type="entry name" value="E3 UBIQUITIN-PROTEIN LIGASE UBR5"/>
    <property type="match status" value="1"/>
</dbReference>
<dbReference type="PANTHER" id="PTHR46276:SF1">
    <property type="entry name" value="E3 UBIQUITIN-PROTEIN LIGASE UBR5"/>
    <property type="match status" value="1"/>
</dbReference>
<dbReference type="Pfam" id="PF11547">
    <property type="entry name" value="E3_UbLigase_EDD"/>
    <property type="match status" value="1"/>
</dbReference>
<dbReference type="Pfam" id="PF00632">
    <property type="entry name" value="HECT"/>
    <property type="match status" value="1"/>
</dbReference>
<dbReference type="Pfam" id="PF00658">
    <property type="entry name" value="MLLE"/>
    <property type="match status" value="1"/>
</dbReference>
<dbReference type="SMART" id="SM00119">
    <property type="entry name" value="HECTc"/>
    <property type="match status" value="1"/>
</dbReference>
<dbReference type="SMART" id="SM00517">
    <property type="entry name" value="PolyA"/>
    <property type="match status" value="1"/>
</dbReference>
<dbReference type="SMART" id="SM00396">
    <property type="entry name" value="ZnF_UBR1"/>
    <property type="match status" value="1"/>
</dbReference>
<dbReference type="SUPFAM" id="SSF56204">
    <property type="entry name" value="Hect, E3 ligase catalytic domain"/>
    <property type="match status" value="1"/>
</dbReference>
<dbReference type="SUPFAM" id="SSF63570">
    <property type="entry name" value="PABC (PABP) domain"/>
    <property type="match status" value="1"/>
</dbReference>
<dbReference type="SUPFAM" id="SSF50985">
    <property type="entry name" value="RCC1/BLIP-II"/>
    <property type="match status" value="1"/>
</dbReference>
<dbReference type="PROSITE" id="PS50237">
    <property type="entry name" value="HECT"/>
    <property type="match status" value="1"/>
</dbReference>
<dbReference type="PROSITE" id="PS51309">
    <property type="entry name" value="PABC"/>
    <property type="match status" value="1"/>
</dbReference>
<dbReference type="PROSITE" id="PS51157">
    <property type="entry name" value="ZF_UBR"/>
    <property type="match status" value="1"/>
</dbReference>
<protein>
    <recommendedName>
        <fullName>E3 ubiquitin-protein ligase UBR5</fullName>
        <ecNumber evidence="1">2.3.2.26</ecNumber>
    </recommendedName>
    <alternativeName>
        <fullName>100 kDa protein</fullName>
    </alternativeName>
    <alternativeName>
        <fullName>E3 ubiquitin-protein ligase, HECT domain-containing 1</fullName>
    </alternativeName>
    <alternativeName>
        <fullName>HECT-type E3 ubiquitin transferase UBR5</fullName>
    </alternativeName>
    <alternativeName>
        <fullName>Hyperplastic discs protein homolog</fullName>
    </alternativeName>
</protein>
<reference key="1">
    <citation type="journal article" date="2004" name="Nature">
        <title>Genome sequence of the Brown Norway rat yields insights into mammalian evolution.</title>
        <authorList>
            <person name="Gibbs R.A."/>
            <person name="Weinstock G.M."/>
            <person name="Metzker M.L."/>
            <person name="Muzny D.M."/>
            <person name="Sodergren E.J."/>
            <person name="Scherer S."/>
            <person name="Scott G."/>
            <person name="Steffen D."/>
            <person name="Worley K.C."/>
            <person name="Burch P.E."/>
            <person name="Okwuonu G."/>
            <person name="Hines S."/>
            <person name="Lewis L."/>
            <person name="Deramo C."/>
            <person name="Delgado O."/>
            <person name="Dugan-Rocha S."/>
            <person name="Miner G."/>
            <person name="Morgan M."/>
            <person name="Hawes A."/>
            <person name="Gill R."/>
            <person name="Holt R.A."/>
            <person name="Adams M.D."/>
            <person name="Amanatides P.G."/>
            <person name="Baden-Tillson H."/>
            <person name="Barnstead M."/>
            <person name="Chin S."/>
            <person name="Evans C.A."/>
            <person name="Ferriera S."/>
            <person name="Fosler C."/>
            <person name="Glodek A."/>
            <person name="Gu Z."/>
            <person name="Jennings D."/>
            <person name="Kraft C.L."/>
            <person name="Nguyen T."/>
            <person name="Pfannkoch C.M."/>
            <person name="Sitter C."/>
            <person name="Sutton G.G."/>
            <person name="Venter J.C."/>
            <person name="Woodage T."/>
            <person name="Smith D."/>
            <person name="Lee H.-M."/>
            <person name="Gustafson E."/>
            <person name="Cahill P."/>
            <person name="Kana A."/>
            <person name="Doucette-Stamm L."/>
            <person name="Weinstock K."/>
            <person name="Fechtel K."/>
            <person name="Weiss R.B."/>
            <person name="Dunn D.M."/>
            <person name="Green E.D."/>
            <person name="Blakesley R.W."/>
            <person name="Bouffard G.G."/>
            <person name="De Jong P.J."/>
            <person name="Osoegawa K."/>
            <person name="Zhu B."/>
            <person name="Marra M."/>
            <person name="Schein J."/>
            <person name="Bosdet I."/>
            <person name="Fjell C."/>
            <person name="Jones S."/>
            <person name="Krzywinski M."/>
            <person name="Mathewson C."/>
            <person name="Siddiqui A."/>
            <person name="Wye N."/>
            <person name="McPherson J."/>
            <person name="Zhao S."/>
            <person name="Fraser C.M."/>
            <person name="Shetty J."/>
            <person name="Shatsman S."/>
            <person name="Geer K."/>
            <person name="Chen Y."/>
            <person name="Abramzon S."/>
            <person name="Nierman W.C."/>
            <person name="Havlak P.H."/>
            <person name="Chen R."/>
            <person name="Durbin K.J."/>
            <person name="Egan A."/>
            <person name="Ren Y."/>
            <person name="Song X.-Z."/>
            <person name="Li B."/>
            <person name="Liu Y."/>
            <person name="Qin X."/>
            <person name="Cawley S."/>
            <person name="Cooney A.J."/>
            <person name="D'Souza L.M."/>
            <person name="Martin K."/>
            <person name="Wu J.Q."/>
            <person name="Gonzalez-Garay M.L."/>
            <person name="Jackson A.R."/>
            <person name="Kalafus K.J."/>
            <person name="McLeod M.P."/>
            <person name="Milosavljevic A."/>
            <person name="Virk D."/>
            <person name="Volkov A."/>
            <person name="Wheeler D.A."/>
            <person name="Zhang Z."/>
            <person name="Bailey J.A."/>
            <person name="Eichler E.E."/>
            <person name="Tuzun E."/>
            <person name="Birney E."/>
            <person name="Mongin E."/>
            <person name="Ureta-Vidal A."/>
            <person name="Woodwark C."/>
            <person name="Zdobnov E."/>
            <person name="Bork P."/>
            <person name="Suyama M."/>
            <person name="Torrents D."/>
            <person name="Alexandersson M."/>
            <person name="Trask B.J."/>
            <person name="Young J.M."/>
            <person name="Huang H."/>
            <person name="Wang H."/>
            <person name="Xing H."/>
            <person name="Daniels S."/>
            <person name="Gietzen D."/>
            <person name="Schmidt J."/>
            <person name="Stevens K."/>
            <person name="Vitt U."/>
            <person name="Wingrove J."/>
            <person name="Camara F."/>
            <person name="Mar Alba M."/>
            <person name="Abril J.F."/>
            <person name="Guigo R."/>
            <person name="Smit A."/>
            <person name="Dubchak I."/>
            <person name="Rubin E.M."/>
            <person name="Couronne O."/>
            <person name="Poliakov A."/>
            <person name="Huebner N."/>
            <person name="Ganten D."/>
            <person name="Goesele C."/>
            <person name="Hummel O."/>
            <person name="Kreitler T."/>
            <person name="Lee Y.-A."/>
            <person name="Monti J."/>
            <person name="Schulz H."/>
            <person name="Zimdahl H."/>
            <person name="Himmelbauer H."/>
            <person name="Lehrach H."/>
            <person name="Jacob H.J."/>
            <person name="Bromberg S."/>
            <person name="Gullings-Handley J."/>
            <person name="Jensen-Seaman M.I."/>
            <person name="Kwitek A.E."/>
            <person name="Lazar J."/>
            <person name="Pasko D."/>
            <person name="Tonellato P.J."/>
            <person name="Twigger S."/>
            <person name="Ponting C.P."/>
            <person name="Duarte J.M."/>
            <person name="Rice S."/>
            <person name="Goodstadt L."/>
            <person name="Beatson S.A."/>
            <person name="Emes R.D."/>
            <person name="Winter E.E."/>
            <person name="Webber C."/>
            <person name="Brandt P."/>
            <person name="Nyakatura G."/>
            <person name="Adetobi M."/>
            <person name="Chiaromonte F."/>
            <person name="Elnitski L."/>
            <person name="Eswara P."/>
            <person name="Hardison R.C."/>
            <person name="Hou M."/>
            <person name="Kolbe D."/>
            <person name="Makova K."/>
            <person name="Miller W."/>
            <person name="Nekrutenko A."/>
            <person name="Riemer C."/>
            <person name="Schwartz S."/>
            <person name="Taylor J."/>
            <person name="Yang S."/>
            <person name="Zhang Y."/>
            <person name="Lindpaintner K."/>
            <person name="Andrews T.D."/>
            <person name="Caccamo M."/>
            <person name="Clamp M."/>
            <person name="Clarke L."/>
            <person name="Curwen V."/>
            <person name="Durbin R.M."/>
            <person name="Eyras E."/>
            <person name="Searle S.M."/>
            <person name="Cooper G.M."/>
            <person name="Batzoglou S."/>
            <person name="Brudno M."/>
            <person name="Sidow A."/>
            <person name="Stone E.A."/>
            <person name="Payseur B.A."/>
            <person name="Bourque G."/>
            <person name="Lopez-Otin C."/>
            <person name="Puente X.S."/>
            <person name="Chakrabarti K."/>
            <person name="Chatterji S."/>
            <person name="Dewey C."/>
            <person name="Pachter L."/>
            <person name="Bray N."/>
            <person name="Yap V.B."/>
            <person name="Caspi A."/>
            <person name="Tesler G."/>
            <person name="Pevzner P.A."/>
            <person name="Haussler D."/>
            <person name="Roskin K.M."/>
            <person name="Baertsch R."/>
            <person name="Clawson H."/>
            <person name="Furey T.S."/>
            <person name="Hinrichs A.S."/>
            <person name="Karolchik D."/>
            <person name="Kent W.J."/>
            <person name="Rosenbloom K.R."/>
            <person name="Trumbower H."/>
            <person name="Weirauch M."/>
            <person name="Cooper D.N."/>
            <person name="Stenson P.D."/>
            <person name="Ma B."/>
            <person name="Brent M."/>
            <person name="Arumugam M."/>
            <person name="Shteynberg D."/>
            <person name="Copley R.R."/>
            <person name="Taylor M.S."/>
            <person name="Riethman H."/>
            <person name="Mudunuri U."/>
            <person name="Peterson J."/>
            <person name="Guyer M."/>
            <person name="Felsenfeld A."/>
            <person name="Old S."/>
            <person name="Mockrin S."/>
            <person name="Collins F.S."/>
        </authorList>
    </citation>
    <scope>NUCLEOTIDE SEQUENCE [LARGE SCALE GENOMIC DNA]</scope>
    <source>
        <strain>Brown Norway</strain>
    </source>
</reference>
<reference key="2">
    <citation type="journal article" date="1992" name="Nucleic Acids Res.">
        <title>Molecular characterization of a novel rat protein structurally related to poly(A) binding proteins and the 70K protein of the U1 small nuclear ribonucleoprotein particle (snRNP).</title>
        <authorList>
            <person name="Mueller D."/>
            <person name="Rehbein M."/>
            <person name="Baumeister H."/>
            <person name="Richter D."/>
        </authorList>
    </citation>
    <scope>NUCLEOTIDE SEQUENCE [MRNA] OF 1868-2788</scope>
    <source>
        <strain>Wistar</strain>
        <tissue>Testis</tissue>
    </source>
</reference>
<reference key="3">
    <citation type="journal article" date="1992" name="Nucleic Acids Res.">
        <authorList>
            <person name="Mueller D."/>
            <person name="Rehbein M."/>
            <person name="Baumeister H."/>
            <person name="Richter D."/>
        </authorList>
    </citation>
    <scope>ERRATUM OF PUBMED:1533713</scope>
</reference>
<reference key="4">
    <citation type="journal article" date="1998" name="Oncogene">
        <title>Identification of a human HECT family protein with homology to the Drosophila tumor suppressor gene hyperplastic discs.</title>
        <authorList>
            <person name="Callaghan M.J."/>
            <person name="Russell A.J."/>
            <person name="Woollatt E."/>
            <person name="Sutherland G.R."/>
            <person name="Sutherland R.L."/>
            <person name="Watts C.K.W."/>
        </authorList>
    </citation>
    <scope>IDENTIFICATION OF PROBABLE FRAMESHIFT</scope>
</reference>
<reference key="5">
    <citation type="journal article" date="2002" name="Endocrinology">
        <title>Characterization of rat100, a 300-kilodalton ubiquitin-protein ligase induced in germ cells of the rat testis and similar to the Drosophila hyperplastic discs gene.</title>
        <authorList>
            <person name="Oughtred R."/>
            <person name="Bedard N."/>
            <person name="Adegoke O.A.J."/>
            <person name="Morales C.R."/>
            <person name="Trasler J."/>
            <person name="Rajapurohitam V."/>
            <person name="Wing S.S."/>
        </authorList>
    </citation>
    <scope>TISSUE SPECIFICITY</scope>
    <scope>DEVELOPMENTAL STAGE</scope>
</reference>
<reference key="6">
    <citation type="journal article" date="2012" name="Nat. Commun.">
        <title>Quantitative maps of protein phosphorylation sites across 14 different rat organs and tissues.</title>
        <authorList>
            <person name="Lundby A."/>
            <person name="Secher A."/>
            <person name="Lage K."/>
            <person name="Nordsborg N.B."/>
            <person name="Dmytriyev A."/>
            <person name="Lundby C."/>
            <person name="Olsen J.V."/>
        </authorList>
    </citation>
    <scope>PHOSPHORYLATION [LARGE SCALE ANALYSIS] AT SER-2231 AND SER-2475</scope>
    <scope>IDENTIFICATION BY MASS SPECTROMETRY [LARGE SCALE ANALYSIS]</scope>
</reference>
<reference evidence="10" key="7">
    <citation type="journal article" date="2015" name="J. Biol. Chem.">
        <title>The MLLE domain of the ubiquitin ligase UBR5 binds to its catalytic domain to regulate substrate binding.</title>
        <authorList>
            <person name="Munoz-Escobar J."/>
            <person name="Matta-Camacho E."/>
            <person name="Kozlov G."/>
            <person name="Gehring K."/>
        </authorList>
    </citation>
    <scope>X-RAY CRYSTALLOGRAPHY (2.60 ANGSTROMS) OF 2383-2442</scope>
</reference>
<name>UBR5_RAT</name>
<accession>Q62671</accession>
<accession>F1LRS0</accession>
<feature type="chain" id="PRO_0000086933" description="E3 ubiquitin-protein ligase UBR5">
    <location>
        <begin position="1"/>
        <end position="2788"/>
    </location>
</feature>
<feature type="domain" description="UBA" evidence="4">
    <location>
        <begin position="174"/>
        <end position="216"/>
    </location>
</feature>
<feature type="domain" description="PABC" evidence="6">
    <location>
        <begin position="2367"/>
        <end position="2444"/>
    </location>
</feature>
<feature type="domain" description="HECT" evidence="3">
    <location>
        <begin position="2451"/>
        <end position="2788"/>
    </location>
</feature>
<feature type="zinc finger region" description="UBR-type" evidence="5">
    <location>
        <begin position="1166"/>
        <end position="1234"/>
    </location>
</feature>
<feature type="region of interest" description="Disordered" evidence="7">
    <location>
        <begin position="68"/>
        <end position="165"/>
    </location>
</feature>
<feature type="region of interest" description="Disordered" evidence="7">
    <location>
        <begin position="318"/>
        <end position="343"/>
    </location>
</feature>
<feature type="region of interest" description="Disordered" evidence="7">
    <location>
        <begin position="572"/>
        <end position="636"/>
    </location>
</feature>
<feature type="region of interest" description="Disordered" evidence="7">
    <location>
        <begin position="988"/>
        <end position="1024"/>
    </location>
</feature>
<feature type="region of interest" description="Disordered" evidence="7">
    <location>
        <begin position="1041"/>
        <end position="1064"/>
    </location>
</feature>
<feature type="region of interest" description="Disordered" evidence="7">
    <location>
        <begin position="1288"/>
        <end position="1308"/>
    </location>
</feature>
<feature type="region of interest" description="Disordered" evidence="7">
    <location>
        <begin position="1504"/>
        <end position="1729"/>
    </location>
</feature>
<feature type="region of interest" description="Disordered" evidence="7">
    <location>
        <begin position="1848"/>
        <end position="1881"/>
    </location>
</feature>
<feature type="region of interest" description="Disordered" evidence="7">
    <location>
        <begin position="1974"/>
        <end position="2011"/>
    </location>
</feature>
<feature type="region of interest" description="Disordered" evidence="7">
    <location>
        <begin position="2106"/>
        <end position="2132"/>
    </location>
</feature>
<feature type="region of interest" description="Disordered" evidence="7">
    <location>
        <begin position="2313"/>
        <end position="2383"/>
    </location>
</feature>
<feature type="region of interest" description="Disordered" evidence="7">
    <location>
        <begin position="2463"/>
        <end position="2490"/>
    </location>
</feature>
<feature type="compositionally biased region" description="Basic and acidic residues" evidence="7">
    <location>
        <begin position="68"/>
        <end position="78"/>
    </location>
</feature>
<feature type="compositionally biased region" description="Low complexity" evidence="7">
    <location>
        <begin position="84"/>
        <end position="101"/>
    </location>
</feature>
<feature type="compositionally biased region" description="Gly residues" evidence="7">
    <location>
        <begin position="125"/>
        <end position="134"/>
    </location>
</feature>
<feature type="compositionally biased region" description="Basic and acidic residues" evidence="7">
    <location>
        <begin position="318"/>
        <end position="337"/>
    </location>
</feature>
<feature type="compositionally biased region" description="Basic and acidic residues" evidence="7">
    <location>
        <begin position="572"/>
        <end position="593"/>
    </location>
</feature>
<feature type="compositionally biased region" description="Low complexity" evidence="7">
    <location>
        <begin position="603"/>
        <end position="617"/>
    </location>
</feature>
<feature type="compositionally biased region" description="Pro residues" evidence="7">
    <location>
        <begin position="1006"/>
        <end position="1022"/>
    </location>
</feature>
<feature type="compositionally biased region" description="Polar residues" evidence="7">
    <location>
        <begin position="1050"/>
        <end position="1062"/>
    </location>
</feature>
<feature type="compositionally biased region" description="Low complexity" evidence="7">
    <location>
        <begin position="1513"/>
        <end position="1526"/>
    </location>
</feature>
<feature type="compositionally biased region" description="Polar residues" evidence="7">
    <location>
        <begin position="1527"/>
        <end position="1542"/>
    </location>
</feature>
<feature type="compositionally biased region" description="Acidic residues" evidence="7">
    <location>
        <begin position="1548"/>
        <end position="1563"/>
    </location>
</feature>
<feature type="compositionally biased region" description="Acidic residues" evidence="7">
    <location>
        <begin position="1594"/>
        <end position="1603"/>
    </location>
</feature>
<feature type="compositionally biased region" description="Polar residues" evidence="7">
    <location>
        <begin position="1618"/>
        <end position="1627"/>
    </location>
</feature>
<feature type="compositionally biased region" description="Low complexity" evidence="7">
    <location>
        <begin position="1630"/>
        <end position="1646"/>
    </location>
</feature>
<feature type="compositionally biased region" description="Low complexity" evidence="7">
    <location>
        <begin position="1657"/>
        <end position="1670"/>
    </location>
</feature>
<feature type="compositionally biased region" description="Low complexity" evidence="7">
    <location>
        <begin position="1715"/>
        <end position="1729"/>
    </location>
</feature>
<feature type="compositionally biased region" description="Basic and acidic residues" evidence="7">
    <location>
        <begin position="1868"/>
        <end position="1881"/>
    </location>
</feature>
<feature type="compositionally biased region" description="Acidic residues" evidence="7">
    <location>
        <begin position="1975"/>
        <end position="1988"/>
    </location>
</feature>
<feature type="compositionally biased region" description="Basic and acidic residues" evidence="7">
    <location>
        <begin position="2322"/>
        <end position="2338"/>
    </location>
</feature>
<feature type="compositionally biased region" description="Basic and acidic residues" evidence="7">
    <location>
        <begin position="2346"/>
        <end position="2358"/>
    </location>
</feature>
<feature type="compositionally biased region" description="Acidic residues" evidence="7">
    <location>
        <begin position="2479"/>
        <end position="2489"/>
    </location>
</feature>
<feature type="active site" description="Glycyl thioester intermediate" evidence="3">
    <location>
        <position position="2757"/>
    </location>
</feature>
<feature type="modified residue" description="Phosphoserine" evidence="1">
    <location>
        <position position="100"/>
    </location>
</feature>
<feature type="modified residue" description="Phosphoserine" evidence="1">
    <location>
        <position position="317"/>
    </location>
</feature>
<feature type="modified residue" description="Phosphoserine" evidence="1">
    <location>
        <position position="342"/>
    </location>
</feature>
<feature type="modified residue" description="Phosphoserine" evidence="1">
    <location>
        <position position="567"/>
    </location>
</feature>
<feature type="modified residue" description="Phosphoserine" evidence="1">
    <location>
        <position position="601"/>
    </location>
</feature>
<feature type="modified residue" description="Phosphothreonine" evidence="1">
    <location>
        <position position="626"/>
    </location>
</feature>
<feature type="modified residue" description="Phosphoserine" evidence="1">
    <location>
        <position position="797"/>
    </location>
</feature>
<feature type="modified residue" description="Phosphoserine" evidence="1">
    <location>
        <position position="917"/>
    </location>
</feature>
<feature type="modified residue" description="Phosphoserine" evidence="1">
    <location>
        <position position="1007"/>
    </location>
</feature>
<feature type="modified residue" description="Phosphothreonine" evidence="1">
    <location>
        <position position="1104"/>
    </location>
</feature>
<feature type="modified residue" description="Phosphothreonine" evidence="1">
    <location>
        <position position="1124"/>
    </location>
</feature>
<feature type="modified residue" description="Phosphoserine" evidence="1">
    <location>
        <position position="1216"/>
    </location>
</feature>
<feature type="modified residue" description="Phosphoserine" evidence="1">
    <location>
        <position position="1297"/>
    </location>
</feature>
<feature type="modified residue" description="Phosphoserine" evidence="1">
    <location>
        <position position="1344"/>
    </location>
</feature>
<feature type="modified residue" description="Phosphoserine" evidence="1">
    <location>
        <position position="1364"/>
    </location>
</feature>
<feature type="modified residue" description="Phosphoserine" evidence="1">
    <location>
        <position position="1470"/>
    </location>
</feature>
<feature type="modified residue" description="Phosphoserine" evidence="1">
    <location>
        <position position="1538"/>
    </location>
</feature>
<feature type="modified residue" description="Phosphothreonine" evidence="1">
    <location>
        <position position="1725"/>
    </location>
</feature>
<feature type="modified residue" description="Phosphoserine" evidence="1">
    <location>
        <position position="1730"/>
    </location>
</feature>
<feature type="modified residue" description="Phosphotyrosine" evidence="1">
    <location>
        <position position="1735"/>
    </location>
</feature>
<feature type="modified residue" description="Phosphoserine" evidence="1">
    <location>
        <position position="1769"/>
    </location>
</feature>
<feature type="modified residue" description="Phosphothreonine" evidence="1">
    <location>
        <position position="1959"/>
    </location>
</feature>
<feature type="modified residue" description="Phosphoserine" evidence="1">
    <location>
        <position position="1980"/>
    </location>
</feature>
<feature type="modified residue" description="Phosphoserine" evidence="1">
    <location>
        <position position="2016"/>
    </location>
</feature>
<feature type="modified residue" description="Phosphoserine" evidence="1">
    <location>
        <position position="2018"/>
    </location>
</feature>
<feature type="modified residue" description="Phosphothreonine" evidence="1">
    <location>
        <position position="2020"/>
    </location>
</feature>
<feature type="modified residue" description="Phosphoserine" evidence="1">
    <location>
        <position position="2066"/>
    </location>
</feature>
<feature type="modified residue" description="Phosphothreonine" evidence="1">
    <location>
        <position position="2203"/>
    </location>
</feature>
<feature type="modified residue" description="Phosphoserine" evidence="11">
    <location>
        <position position="2231"/>
    </location>
</feature>
<feature type="modified residue" description="Phosphoserine" evidence="1">
    <location>
        <position position="2279"/>
    </location>
</feature>
<feature type="modified residue" description="Phosphoserine" evidence="1">
    <location>
        <position position="2459"/>
    </location>
</feature>
<feature type="modified residue" description="Phosphoserine" evidence="1">
    <location>
        <position position="2473"/>
    </location>
</feature>
<feature type="modified residue" description="Phosphoserine" evidence="11">
    <location>
        <position position="2475"/>
    </location>
</feature>
<feature type="sequence conflict" description="In Ref. 2; CAA45756." evidence="9" ref="2">
    <location>
        <position position="1890"/>
    </location>
</feature>
<feature type="helix" evidence="12">
    <location>
        <begin position="2383"/>
        <end position="2396"/>
    </location>
</feature>
<feature type="helix" evidence="12">
    <location>
        <begin position="2400"/>
        <end position="2402"/>
    </location>
</feature>
<feature type="helix" evidence="12">
    <location>
        <begin position="2403"/>
        <end position="2410"/>
    </location>
</feature>
<feature type="helix" evidence="12">
    <location>
        <begin position="2415"/>
        <end position="2423"/>
    </location>
</feature>
<feature type="helix" evidence="12">
    <location>
        <begin position="2425"/>
        <end position="2439"/>
    </location>
</feature>
<keyword id="KW-0002">3D-structure</keyword>
<keyword id="KW-0963">Cytoplasm</keyword>
<keyword id="KW-0227">DNA damage</keyword>
<keyword id="KW-0234">DNA repair</keyword>
<keyword id="KW-0479">Metal-binding</keyword>
<keyword id="KW-0539">Nucleus</keyword>
<keyword id="KW-0597">Phosphoprotein</keyword>
<keyword id="KW-1185">Reference proteome</keyword>
<keyword id="KW-0808">Transferase</keyword>
<keyword id="KW-0833">Ubl conjugation pathway</keyword>
<keyword id="KW-0862">Zinc</keyword>
<keyword id="KW-0863">Zinc-finger</keyword>
<sequence length="2788" mass="308027">MNKQAVKRLHMLREVSEKLNKYNLNSHPPLNVLEQATIKQCVVGPNHAAFLLEDGRICRIGFSVQPDRLELGKPDNNDGSKLNSSSGTGRTSRPGRTSDSPWFLSGSETLGRLAGNTLGSRWSSGVGGSGGGSSGRSSAGARDSRRQTRVIRTGRDRGSGLLGSQPQPVIPASVIPEELISQAQVVLQGKSRSVIIRELQRTNLDVNLAVNNLLSRDDEDGDDGDDTASESYLPGEDLMSLLDADIHSAHPSVIIDADAMFSEDISYFGYPSFRRSSLSRLGSSRVLLLPLERDSELLRERESVLRLRERRWLDGASFDNERGSTSKEGEPNPDKKNTPVQSPVSLGEDLQWWPDKDGTKFTCIGALYSELVAVSSKGELYQWKWTESEPYRNAQNPSLHHPRATFLGLTNEKIVLLSANSIRATVATENNKVATWVDETLSSVASKLEHTAQTYSELQGERIVSLHCCALYTCAQLENNLYWWGVVPFSQRKKMLEKARAKNKKPKSSAGVQSLNVRGGRQVCLRNNPLYHAGAVAFSISAGIPKVGVLMESVWNMNDSCRFQLRSPESLKSMEKASKTIETKPESKQEPVKTEMGPPPSPASTCSDASSIASSASMPYKRRRSTPAPKEEEKVNEEQWSLREVVFVEDVKNVPVGKVLKVDGAYVAVKFPGTSSNTNCQNSSGPDADPSSLLQDCRLLRIDELQVVKTGGTPKVPDCFQRTPKKLCIPEKTEILAVNVDSKGVHAVLKTGNWVRYCIFDLATGKAEQENNFPTSSVAFLGQNERSVAIFTAGQESPIILRDGNGTIYPMAKDCMGGIRDPDWLDLPPISSLGMGVHSLINLPANSTIKKKAAIIIMAVEKQTLMQHILRCDYEACRQYLVNLEQAVVLEQNLQMLQTFISHRCDGNRNILHACVSVCFPTSNKETKEEEEAERSERNTFAERLSAVEAIANAISVVSSNGPGNRAGSSSSRSLRLREMMRRSLRAAGLGRHEAGASSSDHQDPVSPPIAPPSWVPDPPSMDPDGDIDFILAPAVGSLTTAATGGGQGPSTSTIPGPSTEPSVVESKDRKANAHFILKLLCDSAVLQPYLRELLSAKDARGMTPFMSAVSGRAYPAAITILETAQKIAKAEVSGSEKEEDVFMGMVCPSGTNPDDSPLYVLCCNDTCSFTWTGAEHINQDIFECRTCGLLESLCCCTECARVCHKGHDCKLKRTSPTAYCDCWEKCKCKTLIAGQKSARLDLLYRLLTATNLVTLPNSRGEHLLLFLVQTVARQTVEHCQYRPPRIREDRNRKTASPDDSDMPDHDLEPPRFAQLALERVLQDWNALRSMIMFGSQENKDPLSASSRIGHLLPEEQVYLNQQSGTIRLDCFTHCLIVKCTADILLLDTLLGTLVKELQNKYTPGRREEAIAVTMRFLRSVARVFVILSVEMASSKKKNNFIPQPIGKCKRVFQALLPYAVEELCNVAESLIVPVRMGIARPTAPFTLASTSIDAMQGSEELFSVEPLPPRPSSDQSSSSSQSQSSYIIRNPQQRRISQSQPVRGREEEQDDIVSADVEEVEVVEGVAGEEDHHDEQEEHGEENAEAEGHHDEHDEDGSDMELDLLAAAETESDSESNHSNQDNASGRRSVVTAATAGSEAGASSVPAFFSEDDSQSNDSSDSDSSSSQSDDIEQETFMLDEPLERTTNSSHANGAAQAPRSMQWAVRNTQHQRAASTAPSSTSTPAASSAGLIYIDPSNLRRSGTISTSAAAAAAALEASNASSYLTSASSLARAYSIVIRQISDLMGLIPKYNHLVYSQIPAAVKLTYQDAVNLQNYVEEKLIPTWNWMVSIMDSTEAQLRYGSALASAGDPGHPNHPLHASQNSARRERMTAREEASLRTLEGRRRRATLLSARQGMMSARGDFLNYALSLMRSHNDEHSDVLPVLDVCSLKHVAYVFQALIYWIKAMNQQTTLDTPQLERKRTRELLELGIDNEDSEHENDDDTSQSATLNDKDDESLPAETGQNHPFFRRSDSMTFLGCIPPNPFEVPLAEAIPLADQPHLLQPNARKEDLFGRPSQGLYSSSAGSGKCLVEVTMDRNCLEVLPTKMSYAANLKNVMNMQNRQKKAGEDQSMLAEEADSSKPGPSAHDVAAQLKSSLLAEIGLTESEGPPLTSFRPQCSFMGMVISHDMLLGRWRLSLELFGRVFMEDVGAEPGSILTELGGFEVKESKFRREMEKLRNQQSRDLSLEVDRDRDLLIQQTMRQLNNHFGRRCATTPMAVHRVKVTFKDEPGEGSGVARSFYTAIAQAFLSNEKLPNLDCIQNANKGTHTSLMQRLRNRGERDREREREREMRRSSGLRAGSRRDRDRDFRRQLSIDTRPFRPASEGNPSDDPDPLPAHRQALGERLYPRVQAMQPAFASKITGMLLELSPAQLLLLLASEDSLRARVEEAMELIVAHGRENGADSILDLGLLDSSEKVQENRKRHGSSRSVVDMDLDDTDDGDDNAPLFYQPGKRGFYTPRPGKNTEARLNCFRNIGRILGLCLLQNELCPITLNRHVIKVLLGRKVNWHDFAFFDPVMYESLRQLILASQSSDADAVFSAMDLAFAVDLCKEEGGGQVELIPNGVNIPVTPQNVYEYVRKYAEHRMLVVAEQPLHAMRKGLLDVLPKNSLEDLTAEDFRLLVNGCGEVNVQMLISFTSFNDESGENAEKLLQFKRWFWSIVERMSMTERQDLVYFWTSSPSLPASEEGFQPMPSITIRPPDDQHLPTANTCISRLYVPLYSSKQILKQKLLLAIKTKNFGFV</sequence>